<reference key="1">
    <citation type="journal article" date="2015" name="Angew. Chem. Int. Ed.">
        <title>Reconstitution of biosynthetic machinery for the synthesis of the highly elaborated indole diterpene penitrem.</title>
        <authorList>
            <person name="Liu C."/>
            <person name="Tagami K."/>
            <person name="Minami A."/>
            <person name="Matsumoto T."/>
            <person name="Frisvad J.C."/>
            <person name="Suzuki H."/>
            <person name="Ishikawa J."/>
            <person name="Gomi K."/>
            <person name="Oikawa H."/>
        </authorList>
    </citation>
    <scope>NUCLEOTIDE SEQUENCE [GENOMIC DNA]</scope>
    <scope>IDENTIFICATION</scope>
    <scope>FUNCTION</scope>
    <scope>PATHWAY</scope>
    <source>
        <strain>ATCC 90288 / AK-40</strain>
    </source>
</reference>
<dbReference type="EC" id="1.-.-.-" evidence="4"/>
<dbReference type="EMBL" id="LC027936">
    <property type="protein sequence ID" value="BAU61558.1"/>
    <property type="molecule type" value="Genomic_DNA"/>
</dbReference>
<dbReference type="SMR" id="A0A140JWT1"/>
<dbReference type="GO" id="GO:0016020">
    <property type="term" value="C:membrane"/>
    <property type="evidence" value="ECO:0007669"/>
    <property type="project" value="UniProtKB-SubCell"/>
</dbReference>
<dbReference type="GO" id="GO:0071949">
    <property type="term" value="F:FAD binding"/>
    <property type="evidence" value="ECO:0007669"/>
    <property type="project" value="InterPro"/>
</dbReference>
<dbReference type="GO" id="GO:0004497">
    <property type="term" value="F:monooxygenase activity"/>
    <property type="evidence" value="ECO:0007669"/>
    <property type="project" value="UniProtKB-KW"/>
</dbReference>
<dbReference type="Gene3D" id="3.50.50.60">
    <property type="entry name" value="FAD/NAD(P)-binding domain"/>
    <property type="match status" value="1"/>
</dbReference>
<dbReference type="InterPro" id="IPR002938">
    <property type="entry name" value="FAD-bd"/>
</dbReference>
<dbReference type="InterPro" id="IPR036188">
    <property type="entry name" value="FAD/NAD-bd_sf"/>
</dbReference>
<dbReference type="InterPro" id="IPR050562">
    <property type="entry name" value="FAD_mOase_fung"/>
</dbReference>
<dbReference type="PANTHER" id="PTHR47356:SF2">
    <property type="entry name" value="FAD-BINDING DOMAIN-CONTAINING PROTEIN-RELATED"/>
    <property type="match status" value="1"/>
</dbReference>
<dbReference type="PANTHER" id="PTHR47356">
    <property type="entry name" value="FAD-DEPENDENT MONOOXYGENASE ASQG-RELATED"/>
    <property type="match status" value="1"/>
</dbReference>
<dbReference type="Pfam" id="PF01494">
    <property type="entry name" value="FAD_binding_3"/>
    <property type="match status" value="2"/>
</dbReference>
<dbReference type="PRINTS" id="PR00420">
    <property type="entry name" value="RNGMNOXGNASE"/>
</dbReference>
<dbReference type="SUPFAM" id="SSF51905">
    <property type="entry name" value="FAD/NAD(P)-binding domain"/>
    <property type="match status" value="1"/>
</dbReference>
<keyword id="KW-0274">FAD</keyword>
<keyword id="KW-0285">Flavoprotein</keyword>
<keyword id="KW-0472">Membrane</keyword>
<keyword id="KW-0503">Monooxygenase</keyword>
<keyword id="KW-0560">Oxidoreductase</keyword>
<keyword id="KW-0812">Transmembrane</keyword>
<keyword id="KW-1133">Transmembrane helix</keyword>
<gene>
    <name evidence="5" type="primary">ptmM</name>
</gene>
<organism>
    <name type="scientific">Penicillium ochrochloron</name>
    <dbReference type="NCBI Taxonomy" id="69780"/>
    <lineage>
        <taxon>Eukaryota</taxon>
        <taxon>Fungi</taxon>
        <taxon>Dikarya</taxon>
        <taxon>Ascomycota</taxon>
        <taxon>Pezizomycotina</taxon>
        <taxon>Eurotiomycetes</taxon>
        <taxon>Eurotiomycetidae</taxon>
        <taxon>Eurotiales</taxon>
        <taxon>Aspergillaceae</taxon>
        <taxon>Penicillium</taxon>
    </lineage>
</organism>
<protein>
    <recommendedName>
        <fullName evidence="5">FAD-dependent monooxygenase ptmM</fullName>
        <ecNumber evidence="4">1.-.-.-</ecNumber>
    </recommendedName>
    <alternativeName>
        <fullName evidence="5">Penitrem biosynthesis cluster 1 protein M</fullName>
    </alternativeName>
</protein>
<accession>A0A140JWT1</accession>
<comment type="function">
    <text evidence="4">FAD-dependent monooxygenase; part of the gene cluster that mediates the biosynthesis of the indole diterpenes penitrems (PubMed:25831977). The geranylgeranyl diphosphate (GGPP) synthase ptmG catalyzes the first step in penitrem biosynthesis via conversion of farnesyl pyrophosphate and isopentyl pyrophosphate into geranylgeranyl pyrophosphate (GGPP) (PubMed:25831977). Condensation of indole-3-glycerol phosphate with GGPP by the prenyl transferase ptmC then forms 3-geranylgeranylindole (3-GGI) (PubMed:25831977). Epoxidation by the FAD-dependent monooxygenase ptmM leads to a epoxidized-GGI that is substrate of the terpene cyclase ptmB for cyclization to yield paspaline (PubMed:25831977). Paspaline is subsequently converted to 13-desoxypaxilline by the cytochrome P450 monooxygenase ptmP, the latter being then converted to paxilline by the cytochrome P450 monooxygenase ptmQ (PubMed:25831977). Paxilline is converted to beta-paxitriol via C-10 ketoreduction by the short-chain dehydrogenase ptmH which can be monoprenylated at the C-20 by the indole diterpene prenyltransferase ptmD (PubMed:25831977). A two-step elimination (acetylation and elimination) process performed by the O-acetyltransferase ptmV and ptmI leads to the production of the prenylated form of penijanthine (PubMed:25831977). The FAD-linked oxidoreductase ptmO then converts the prenylated form of penijanthine into PC-M5 which is in turn transformed into PC-M4 by the aromatic dimethylallyltransferase ptmE (PubMed:25831977). Five sequential oxidative transformations performed by the cytochrome P450 monooxygenases ptmK, ptmU, ptmL, ptmN and ptmJ yield the various penitrem compounds. PtmK, ptmU and ptmM are involved in the formation of the key bicyclic ring of penitrem C via the formation of the intermediates secopenitrem D and penitrem D. PtmL catalyzes the epoxidation of penitrem D and C to yield penitrem B and F, respectively. PtmJ catalyzes the last benzylic hydroxylation to convert penitrem B to prenitrem E and penitrem F to penitrem A (PubMed:25831977).</text>
</comment>
<comment type="cofactor">
    <cofactor evidence="1">
        <name>FAD</name>
        <dbReference type="ChEBI" id="CHEBI:57692"/>
    </cofactor>
</comment>
<comment type="pathway">
    <text evidence="4">Secondary metabolite biosynthesis.</text>
</comment>
<comment type="subcellular location">
    <subcellularLocation>
        <location evidence="3">Membrane</location>
        <topology evidence="3">Single-pass membrane protein</topology>
    </subcellularLocation>
</comment>
<comment type="similarity">
    <text evidence="6">Belongs to the paxM FAD-dependent monooxygenase family.</text>
</comment>
<feature type="chain" id="PRO_0000446565" description="FAD-dependent monooxygenase ptmM">
    <location>
        <begin position="1"/>
        <end position="422"/>
    </location>
</feature>
<feature type="transmembrane region" description="Helical" evidence="3">
    <location>
        <begin position="8"/>
        <end position="24"/>
    </location>
</feature>
<feature type="binding site" evidence="2">
    <location>
        <position position="35"/>
    </location>
    <ligand>
        <name>FAD</name>
        <dbReference type="ChEBI" id="CHEBI:57692"/>
    </ligand>
</feature>
<feature type="binding site" evidence="2">
    <location>
        <position position="49"/>
    </location>
    <ligand>
        <name>FAD</name>
        <dbReference type="ChEBI" id="CHEBI:57692"/>
    </ligand>
</feature>
<feature type="binding site" evidence="2">
    <location>
        <position position="108"/>
    </location>
    <ligand>
        <name>FAD</name>
        <dbReference type="ChEBI" id="CHEBI:57692"/>
    </ligand>
</feature>
<feature type="binding site" evidence="2">
    <location>
        <position position="308"/>
    </location>
    <ligand>
        <name>FAD</name>
        <dbReference type="ChEBI" id="CHEBI:57692"/>
    </ligand>
</feature>
<feature type="binding site" evidence="2">
    <location>
        <position position="321"/>
    </location>
    <ligand>
        <name>FAD</name>
        <dbReference type="ChEBI" id="CHEBI:57692"/>
    </ligand>
</feature>
<proteinExistence type="inferred from homology"/>
<evidence type="ECO:0000250" key="1">
    <source>
        <dbReference type="UniProtKB" id="A6T923"/>
    </source>
</evidence>
<evidence type="ECO:0000250" key="2">
    <source>
        <dbReference type="UniProtKB" id="B8M9J8"/>
    </source>
</evidence>
<evidence type="ECO:0000255" key="3"/>
<evidence type="ECO:0000269" key="4">
    <source>
    </source>
</evidence>
<evidence type="ECO:0000303" key="5">
    <source>
    </source>
</evidence>
<evidence type="ECO:0000305" key="6"/>
<name>PTMM_PENOH</name>
<sequence length="422" mass="47402">MNKDKFHVIIVGGSIAGLTLAHCLHRAGISHVVLEKASEPAPQIGASVGILPNGARVLDQLQLYETIEKYIEPLETATIGYPDGFSFSSSYPKLVNERFGFPIAFLDRQKLLEILYQHYPDKSKIRLAARVISIESSAIDSEVTTEDGTIYKGHLIVGADGVHSRVRSEMWKAAQRIKPGLVTKREQRSMTVEYSCIFGISAPIKGLIVGEQVNAFFDHLTIVTIHGKNGRVYWFLIQKLDRKYIYPECPRFTAKEIGPIASDLKEVKFFKDITFGQLWDSRETASMTVLEENVFDTWYHGRMVLMGDSVHKMTPNIGQGANMAIEDAAVLSSLLSDLLQKQTQPPTNAQIERLLAQYREVRYPRVNSIYKTSRFLVRFQARDGIFNTLFGRYYAPHAGDLPADMASKTIAGGELISWMAYM</sequence>